<name>AGLU_ASPOR</name>
<organism>
    <name type="scientific">Aspergillus oryzae (strain ATCC 42149 / RIB 40)</name>
    <name type="common">Yellow koji mold</name>
    <dbReference type="NCBI Taxonomy" id="510516"/>
    <lineage>
        <taxon>Eukaryota</taxon>
        <taxon>Fungi</taxon>
        <taxon>Dikarya</taxon>
        <taxon>Ascomycota</taxon>
        <taxon>Pezizomycotina</taxon>
        <taxon>Eurotiomycetes</taxon>
        <taxon>Eurotiomycetidae</taxon>
        <taxon>Eurotiales</taxon>
        <taxon>Aspergillaceae</taxon>
        <taxon>Aspergillus</taxon>
        <taxon>Aspergillus subgen. Circumdati</taxon>
    </lineage>
</organism>
<evidence type="ECO:0000250" key="1"/>
<evidence type="ECO:0000255" key="2"/>
<evidence type="ECO:0000255" key="3">
    <source>
        <dbReference type="PROSITE-ProRule" id="PRU10066"/>
    </source>
</evidence>
<evidence type="ECO:0000305" key="4"/>
<gene>
    <name type="primary">agdA</name>
    <name type="ORF">AO090003001209</name>
</gene>
<protein>
    <recommendedName>
        <fullName>Alpha-glucosidase</fullName>
        <shortName>AGL</shortName>
        <ecNumber>3.2.1.20</ecNumber>
    </recommendedName>
    <alternativeName>
        <fullName>Maltase</fullName>
    </alternativeName>
</protein>
<comment type="function">
    <text>Hydrolyzes malto-oligosaccharides, but has a low activity toward soluble starch.</text>
</comment>
<comment type="catalytic activity">
    <reaction>
        <text>Hydrolysis of terminal, non-reducing (1-&gt;4)-linked alpha-D-glucose residues with release of alpha-D-glucose.</text>
        <dbReference type="EC" id="3.2.1.20"/>
    </reaction>
</comment>
<comment type="induction">
    <text>By maltose.</text>
</comment>
<comment type="similarity">
    <text evidence="4">Belongs to the glycosyl hydrolase 31 family.</text>
</comment>
<reference key="1">
    <citation type="journal article" date="1995" name="Biosci. Biotechnol. Biochem.">
        <title>Nucleotide sequence and expression of alpha-glucosidase-encoding gene (agdA) from Aspergillus oryzae.</title>
        <authorList>
            <person name="Minetoki T."/>
            <person name="Gomi K."/>
            <person name="Kitamoto K."/>
            <person name="Kumagai C."/>
            <person name="Tamura G."/>
        </authorList>
    </citation>
    <scope>NUCLEOTIDE SEQUENCE [GENOMIC DNA]</scope>
    <source>
        <strain>ATCC 42149 / RIB 40</strain>
    </source>
</reference>
<reference key="2">
    <citation type="journal article" date="2000" name="Biosci. Biotechnol. Biochem.">
        <title>Molecular cloning and characterization of a transcriptional activator gene, amyR, involved in the amylolytic gene expression in Aspergillus oryzae.</title>
        <authorList>
            <person name="Gomi K."/>
            <person name="Akeno T."/>
            <person name="Minetoki T."/>
            <person name="Ozeki K."/>
            <person name="Kumagai C."/>
            <person name="Okazaki N."/>
            <person name="Iimura Y."/>
        </authorList>
    </citation>
    <scope>NUCLEOTIDE SEQUENCE [GENOMIC DNA]</scope>
    <source>
        <strain>ATCC 42149 / RIB 40</strain>
    </source>
</reference>
<reference key="3">
    <citation type="journal article" date="2005" name="Nature">
        <title>Genome sequencing and analysis of Aspergillus oryzae.</title>
        <authorList>
            <person name="Machida M."/>
            <person name="Asai K."/>
            <person name="Sano M."/>
            <person name="Tanaka T."/>
            <person name="Kumagai T."/>
            <person name="Terai G."/>
            <person name="Kusumoto K."/>
            <person name="Arima T."/>
            <person name="Akita O."/>
            <person name="Kashiwagi Y."/>
            <person name="Abe K."/>
            <person name="Gomi K."/>
            <person name="Horiuchi H."/>
            <person name="Kitamoto K."/>
            <person name="Kobayashi T."/>
            <person name="Takeuchi M."/>
            <person name="Denning D.W."/>
            <person name="Galagan J.E."/>
            <person name="Nierman W.C."/>
            <person name="Yu J."/>
            <person name="Archer D.B."/>
            <person name="Bennett J.W."/>
            <person name="Bhatnagar D."/>
            <person name="Cleveland T.E."/>
            <person name="Fedorova N.D."/>
            <person name="Gotoh O."/>
            <person name="Horikawa H."/>
            <person name="Hosoyama A."/>
            <person name="Ichinomiya M."/>
            <person name="Igarashi R."/>
            <person name="Iwashita K."/>
            <person name="Juvvadi P.R."/>
            <person name="Kato M."/>
            <person name="Kato Y."/>
            <person name="Kin T."/>
            <person name="Kokubun A."/>
            <person name="Maeda H."/>
            <person name="Maeyama N."/>
            <person name="Maruyama J."/>
            <person name="Nagasaki H."/>
            <person name="Nakajima T."/>
            <person name="Oda K."/>
            <person name="Okada K."/>
            <person name="Paulsen I."/>
            <person name="Sakamoto K."/>
            <person name="Sawano T."/>
            <person name="Takahashi M."/>
            <person name="Takase K."/>
            <person name="Terabayashi Y."/>
            <person name="Wortman J.R."/>
            <person name="Yamada O."/>
            <person name="Yamagata Y."/>
            <person name="Anazawa H."/>
            <person name="Hata Y."/>
            <person name="Koide Y."/>
            <person name="Komori T."/>
            <person name="Koyama Y."/>
            <person name="Minetoki T."/>
            <person name="Suharnan S."/>
            <person name="Tanaka A."/>
            <person name="Isono K."/>
            <person name="Kuhara S."/>
            <person name="Ogasawara N."/>
            <person name="Kikuchi H."/>
        </authorList>
    </citation>
    <scope>NUCLEOTIDE SEQUENCE [LARGE SCALE GENOMIC DNA]</scope>
    <source>
        <strain>ATCC 42149 / RIB 40</strain>
    </source>
</reference>
<proteinExistence type="evidence at transcript level"/>
<sequence>MAGLKSFLASSWLLPVACGASQSIVPSTSATAAYSQFTIPASADVGANLVANIDDPQAVNAQSVCPGYKASDVKHSSQGFTASLELAGDPCNVYGTDVDSLTLTVEYQAKDRLNIQIVPTYFDASNASWYILSEELVPRPKASQNASVPQSDFVVSWSNEPSFNFKVIRKATGDVLFNTKGSTLVYENQFIEFVTLLPEEYNLYGLGERMNQLRLLENANLTLYAADIADPIDDNIYGHHAFYLDTRYYKVGGQNKSHTIVKSSEAEPSQEYVSYSHGVFLRNAHGQEILLRDQKLIWRTLGGSVDLTFYSGPTQAEVTKQYQLSTVGLPAMQQYNTLGFHQCRWGYNNWSEFEDVLANFERFEIPLEYLWADIDYMHGYRNFDNDQHRFSYEEGEKFLNKLHAGGRRWVPIVDGALYIPNPENASDAYETYDRGAKDDVFIKNPDGSLYIGAVWPGYTVYPDWHHPKASDFWANELVTWWNKLHYDGVWYDMAEVSSFCVGSCGTGNLSMNPAHPPFALPGEPGNVVYDYPEGFNITNATEAASASAGAASQSAAASSTTTSAPYLRTTPTPGVRNVDHPPYVINHVQPGHDLSVHAISPNSTHSDGVQEYDVHSLYGHQGINATYHGLLKVWENKRPFIIARSTFSGSGKWAGHWGGDNFSKWGSMFFSISQALQFSLFGIPMFGVDTCGFNGNTDEELCNRWMQLSAFFPFYRNHNVLSAIPQEPYRWASVIDATKAAMNIRYAILPYFYTLFHLAHTTGSTVMRALAWEFPNDPSLAAVGTQFLVGPSVMVIPVLEPQVDTVQGVFPGVGHGEVWYDWYSQTAVDAKPGVNTTISAPLGHIPVFVRGGSILPMQEVALTTRDARKTPWSLLASLSSNGTASGQLYLDDGESVYPEDTLSVDFLASRSTLRASARGTWKEANPLANVTVLGVTEKPSSVTLNGETLSSDSVKYNATSHVLHVGGLQKHTADGAWAKDWVLKW</sequence>
<feature type="signal peptide" evidence="1">
    <location>
        <begin position="1"/>
        <end position="25"/>
    </location>
</feature>
<feature type="chain" id="PRO_0000018577" description="Alpha-glucosidase">
    <location>
        <begin position="26"/>
        <end position="985"/>
    </location>
</feature>
<feature type="active site" description="Nucleophile" evidence="3">
    <location>
        <position position="492"/>
    </location>
</feature>
<feature type="active site" evidence="1">
    <location>
        <position position="495"/>
    </location>
</feature>
<feature type="active site" description="Proton donor" evidence="1">
    <location>
        <position position="660"/>
    </location>
</feature>
<feature type="glycosylation site" description="N-linked (GlcNAc...) asparagine" evidence="2">
    <location>
        <position position="126"/>
    </location>
</feature>
<feature type="glycosylation site" description="N-linked (GlcNAc...) asparagine" evidence="2">
    <location>
        <position position="145"/>
    </location>
</feature>
<feature type="glycosylation site" description="N-linked (GlcNAc...) asparagine" evidence="2">
    <location>
        <position position="220"/>
    </location>
</feature>
<feature type="glycosylation site" description="N-linked (GlcNAc...) asparagine" evidence="2">
    <location>
        <position position="255"/>
    </location>
</feature>
<feature type="glycosylation site" description="N-linked (GlcNAc...) asparagine" evidence="2">
    <location>
        <position position="349"/>
    </location>
</feature>
<feature type="glycosylation site" description="N-linked (GlcNAc...) asparagine" evidence="2">
    <location>
        <position position="424"/>
    </location>
</feature>
<feature type="glycosylation site" description="N-linked (GlcNAc...) asparagine" evidence="2">
    <location>
        <position position="508"/>
    </location>
</feature>
<feature type="glycosylation site" description="N-linked (GlcNAc...) asparagine" evidence="2">
    <location>
        <position position="536"/>
    </location>
</feature>
<feature type="glycosylation site" description="N-linked (GlcNAc...) asparagine" evidence="2">
    <location>
        <position position="539"/>
    </location>
</feature>
<feature type="glycosylation site" description="N-linked (GlcNAc...) asparagine" evidence="2">
    <location>
        <position position="602"/>
    </location>
</feature>
<feature type="glycosylation site" description="N-linked (GlcNAc...) asparagine" evidence="2">
    <location>
        <position position="624"/>
    </location>
</feature>
<feature type="glycosylation site" description="N-linked (GlcNAc...) asparagine" evidence="2">
    <location>
        <position position="661"/>
    </location>
</feature>
<feature type="glycosylation site" description="N-linked (GlcNAc...) asparagine" evidence="2">
    <location>
        <position position="835"/>
    </location>
</feature>
<feature type="glycosylation site" description="N-linked (GlcNAc...) asparagine" evidence="2">
    <location>
        <position position="881"/>
    </location>
</feature>
<feature type="glycosylation site" description="N-linked (GlcNAc...) asparagine" evidence="2">
    <location>
        <position position="929"/>
    </location>
</feature>
<feature type="glycosylation site" description="N-linked (GlcNAc...) asparagine" evidence="2">
    <location>
        <position position="957"/>
    </location>
</feature>
<dbReference type="EC" id="3.2.1.20"/>
<dbReference type="EMBL" id="D45179">
    <property type="protein sequence ID" value="BAA08125.1"/>
    <property type="molecule type" value="Genomic_DNA"/>
</dbReference>
<dbReference type="EMBL" id="AB021876">
    <property type="protein sequence ID" value="BAA95702.1"/>
    <property type="molecule type" value="Genomic_DNA"/>
</dbReference>
<dbReference type="EMBL" id="BA000050">
    <property type="protein sequence ID" value="BAE58289.1"/>
    <property type="molecule type" value="Genomic_DNA"/>
</dbReference>
<dbReference type="PIR" id="JC4217">
    <property type="entry name" value="JC4217"/>
</dbReference>
<dbReference type="RefSeq" id="XP_001820291.1">
    <property type="nucleotide sequence ID" value="XM_001820239.2"/>
</dbReference>
<dbReference type="SMR" id="Q12558"/>
<dbReference type="STRING" id="510516.Q12558"/>
<dbReference type="CAZy" id="GH31">
    <property type="family name" value="Glycoside Hydrolase Family 31"/>
</dbReference>
<dbReference type="GlyCosmos" id="Q12558">
    <property type="glycosylation" value="16 sites, No reported glycans"/>
</dbReference>
<dbReference type="EnsemblFungi" id="BAE58289">
    <property type="protein sequence ID" value="BAE58289"/>
    <property type="gene ID" value="AO090003001209"/>
</dbReference>
<dbReference type="GeneID" id="5992274"/>
<dbReference type="KEGG" id="aor:AO090003001209"/>
<dbReference type="VEuPathDB" id="FungiDB:AO090003001209"/>
<dbReference type="HOGENOM" id="CLU_000631_11_0_1"/>
<dbReference type="OMA" id="PYVINHD"/>
<dbReference type="OrthoDB" id="17581at5052"/>
<dbReference type="Proteomes" id="UP000006564">
    <property type="component" value="Chromosome 2"/>
</dbReference>
<dbReference type="GO" id="GO:0004558">
    <property type="term" value="F:alpha-1,4-glucosidase activity"/>
    <property type="evidence" value="ECO:0000315"/>
    <property type="project" value="AspGD"/>
</dbReference>
<dbReference type="GO" id="GO:0030246">
    <property type="term" value="F:carbohydrate binding"/>
    <property type="evidence" value="ECO:0007669"/>
    <property type="project" value="InterPro"/>
</dbReference>
<dbReference type="GO" id="GO:0046527">
    <property type="term" value="F:glucosyltransferase activity"/>
    <property type="evidence" value="ECO:0000314"/>
    <property type="project" value="AspGD"/>
</dbReference>
<dbReference type="GO" id="GO:0005976">
    <property type="term" value="P:polysaccharide metabolic process"/>
    <property type="evidence" value="ECO:0000305"/>
    <property type="project" value="AspGD"/>
</dbReference>
<dbReference type="CDD" id="cd06602">
    <property type="entry name" value="GH31_MGAM_SI_GAA"/>
    <property type="match status" value="1"/>
</dbReference>
<dbReference type="CDD" id="cd14752">
    <property type="entry name" value="GH31_N"/>
    <property type="match status" value="1"/>
</dbReference>
<dbReference type="FunFam" id="2.60.40.1180:FF:000001">
    <property type="entry name" value="Maltase-glucoamylase, intestinal"/>
    <property type="match status" value="1"/>
</dbReference>
<dbReference type="FunFam" id="2.60.40.1180:FF:000005">
    <property type="entry name" value="Maltase-glucoamylase, intestinal"/>
    <property type="match status" value="1"/>
</dbReference>
<dbReference type="FunFam" id="2.60.40.1760:FF:000005">
    <property type="entry name" value="Putative alpha-glucosidase AgdA"/>
    <property type="match status" value="1"/>
</dbReference>
<dbReference type="FunFam" id="3.20.20.80:FF:000138">
    <property type="entry name" value="Putative alpha-glucosidase AgdA"/>
    <property type="match status" value="1"/>
</dbReference>
<dbReference type="FunFam" id="3.20.20.80:FF:000169">
    <property type="entry name" value="Putative alpha-glucosidase AgdA"/>
    <property type="match status" value="1"/>
</dbReference>
<dbReference type="Gene3D" id="3.20.20.80">
    <property type="entry name" value="Glycosidases"/>
    <property type="match status" value="2"/>
</dbReference>
<dbReference type="Gene3D" id="2.60.40.1760">
    <property type="entry name" value="glycosyl hydrolase (family 31)"/>
    <property type="match status" value="1"/>
</dbReference>
<dbReference type="Gene3D" id="2.60.40.1180">
    <property type="entry name" value="Golgi alpha-mannosidase II"/>
    <property type="match status" value="2"/>
</dbReference>
<dbReference type="InterPro" id="IPR011013">
    <property type="entry name" value="Gal_mutarotase_sf_dom"/>
</dbReference>
<dbReference type="InterPro" id="IPR030458">
    <property type="entry name" value="Glyco_hydro_31_AS"/>
</dbReference>
<dbReference type="InterPro" id="IPR048395">
    <property type="entry name" value="Glyco_hydro_31_C"/>
</dbReference>
<dbReference type="InterPro" id="IPR030459">
    <property type="entry name" value="Glyco_hydro_31_CS"/>
</dbReference>
<dbReference type="InterPro" id="IPR000322">
    <property type="entry name" value="Glyco_hydro_31_TIM"/>
</dbReference>
<dbReference type="InterPro" id="IPR013780">
    <property type="entry name" value="Glyco_hydro_b"/>
</dbReference>
<dbReference type="InterPro" id="IPR017853">
    <property type="entry name" value="Glycoside_hydrolase_SF"/>
</dbReference>
<dbReference type="PANTHER" id="PTHR22762">
    <property type="entry name" value="ALPHA-GLUCOSIDASE"/>
    <property type="match status" value="1"/>
</dbReference>
<dbReference type="PANTHER" id="PTHR22762:SF133">
    <property type="entry name" value="P-TYPE DOMAIN-CONTAINING PROTEIN"/>
    <property type="match status" value="1"/>
</dbReference>
<dbReference type="Pfam" id="PF01055">
    <property type="entry name" value="Glyco_hydro_31_2nd"/>
    <property type="match status" value="1"/>
</dbReference>
<dbReference type="Pfam" id="PF21365">
    <property type="entry name" value="Glyco_hydro_31_3rd"/>
    <property type="match status" value="1"/>
</dbReference>
<dbReference type="SUPFAM" id="SSF51445">
    <property type="entry name" value="(Trans)glycosidases"/>
    <property type="match status" value="1"/>
</dbReference>
<dbReference type="SUPFAM" id="SSF74650">
    <property type="entry name" value="Galactose mutarotase-like"/>
    <property type="match status" value="1"/>
</dbReference>
<dbReference type="SUPFAM" id="SSF51011">
    <property type="entry name" value="Glycosyl hydrolase domain"/>
    <property type="match status" value="1"/>
</dbReference>
<dbReference type="PROSITE" id="PS00129">
    <property type="entry name" value="GLYCOSYL_HYDROL_F31_1"/>
    <property type="match status" value="1"/>
</dbReference>
<dbReference type="PROSITE" id="PS00707">
    <property type="entry name" value="GLYCOSYL_HYDROL_F31_2"/>
    <property type="match status" value="1"/>
</dbReference>
<keyword id="KW-0325">Glycoprotein</keyword>
<keyword id="KW-0326">Glycosidase</keyword>
<keyword id="KW-0378">Hydrolase</keyword>
<keyword id="KW-1185">Reference proteome</keyword>
<keyword id="KW-0732">Signal</keyword>
<accession>Q12558</accession>
<accession>Q7LWA9</accession>